<keyword id="KW-0934">Plastid</keyword>
<keyword id="KW-0687">Ribonucleoprotein</keyword>
<keyword id="KW-0689">Ribosomal protein</keyword>
<organism>
    <name type="scientific">Cuscuta exaltata</name>
    <name type="common">Tall dodder</name>
    <dbReference type="NCBI Taxonomy" id="476139"/>
    <lineage>
        <taxon>Eukaryota</taxon>
        <taxon>Viridiplantae</taxon>
        <taxon>Streptophyta</taxon>
        <taxon>Embryophyta</taxon>
        <taxon>Tracheophyta</taxon>
        <taxon>Spermatophyta</taxon>
        <taxon>Magnoliopsida</taxon>
        <taxon>eudicotyledons</taxon>
        <taxon>Gunneridae</taxon>
        <taxon>Pentapetalae</taxon>
        <taxon>asterids</taxon>
        <taxon>lamiids</taxon>
        <taxon>Solanales</taxon>
        <taxon>Convolvulaceae</taxon>
        <taxon>Cuscuteae</taxon>
        <taxon>Cuscuta</taxon>
        <taxon>Cuscuta subgen. Monogynella</taxon>
    </lineage>
</organism>
<feature type="chain" id="PRO_0000352107" description="Small ribosomal subunit protein uS2c">
    <location>
        <begin position="1"/>
        <end position="236"/>
    </location>
</feature>
<name>RR2_CUSEX</name>
<comment type="subcellular location">
    <subcellularLocation>
        <location>Plastid</location>
    </subcellularLocation>
</comment>
<comment type="similarity">
    <text evidence="1">Belongs to the universal ribosomal protein uS2 family.</text>
</comment>
<dbReference type="EMBL" id="EU189132">
    <property type="protein sequence ID" value="ABW83684.1"/>
    <property type="molecule type" value="Genomic_DNA"/>
</dbReference>
<dbReference type="RefSeq" id="YP_001542520.1">
    <property type="nucleotide sequence ID" value="NC_009963.1"/>
</dbReference>
<dbReference type="SMR" id="A8W3B3"/>
<dbReference type="GeneID" id="5729651"/>
<dbReference type="GO" id="GO:0005763">
    <property type="term" value="C:mitochondrial small ribosomal subunit"/>
    <property type="evidence" value="ECO:0007669"/>
    <property type="project" value="TreeGrafter"/>
</dbReference>
<dbReference type="GO" id="GO:0009536">
    <property type="term" value="C:plastid"/>
    <property type="evidence" value="ECO:0007669"/>
    <property type="project" value="UniProtKB-SubCell"/>
</dbReference>
<dbReference type="GO" id="GO:0003735">
    <property type="term" value="F:structural constituent of ribosome"/>
    <property type="evidence" value="ECO:0007669"/>
    <property type="project" value="InterPro"/>
</dbReference>
<dbReference type="GO" id="GO:0006412">
    <property type="term" value="P:translation"/>
    <property type="evidence" value="ECO:0007669"/>
    <property type="project" value="InterPro"/>
</dbReference>
<dbReference type="CDD" id="cd01425">
    <property type="entry name" value="RPS2"/>
    <property type="match status" value="1"/>
</dbReference>
<dbReference type="FunFam" id="3.40.50.10490:FF:000101">
    <property type="match status" value="1"/>
</dbReference>
<dbReference type="FunFam" id="1.10.287.610:FF:000001">
    <property type="entry name" value="30S ribosomal protein S2"/>
    <property type="match status" value="1"/>
</dbReference>
<dbReference type="Gene3D" id="3.40.50.10490">
    <property type="entry name" value="Glucose-6-phosphate isomerase like protein, domain 1"/>
    <property type="match status" value="1"/>
</dbReference>
<dbReference type="Gene3D" id="1.10.287.610">
    <property type="entry name" value="Helix hairpin bin"/>
    <property type="match status" value="1"/>
</dbReference>
<dbReference type="HAMAP" id="MF_00291_B">
    <property type="entry name" value="Ribosomal_uS2_B"/>
    <property type="match status" value="1"/>
</dbReference>
<dbReference type="InterPro" id="IPR001865">
    <property type="entry name" value="Ribosomal_uS2"/>
</dbReference>
<dbReference type="InterPro" id="IPR005706">
    <property type="entry name" value="Ribosomal_uS2_bac/mit/plastid"/>
</dbReference>
<dbReference type="InterPro" id="IPR018130">
    <property type="entry name" value="Ribosomal_uS2_CS"/>
</dbReference>
<dbReference type="InterPro" id="IPR023591">
    <property type="entry name" value="Ribosomal_uS2_flav_dom_sf"/>
</dbReference>
<dbReference type="NCBIfam" id="TIGR01011">
    <property type="entry name" value="rpsB_bact"/>
    <property type="match status" value="1"/>
</dbReference>
<dbReference type="PANTHER" id="PTHR12534">
    <property type="entry name" value="30S RIBOSOMAL PROTEIN S2 PROKARYOTIC AND ORGANELLAR"/>
    <property type="match status" value="1"/>
</dbReference>
<dbReference type="PANTHER" id="PTHR12534:SF0">
    <property type="entry name" value="SMALL RIBOSOMAL SUBUNIT PROTEIN US2M"/>
    <property type="match status" value="1"/>
</dbReference>
<dbReference type="Pfam" id="PF00318">
    <property type="entry name" value="Ribosomal_S2"/>
    <property type="match status" value="1"/>
</dbReference>
<dbReference type="PRINTS" id="PR00395">
    <property type="entry name" value="RIBOSOMALS2"/>
</dbReference>
<dbReference type="SUPFAM" id="SSF52313">
    <property type="entry name" value="Ribosomal protein S2"/>
    <property type="match status" value="1"/>
</dbReference>
<dbReference type="PROSITE" id="PS00962">
    <property type="entry name" value="RIBOSOMAL_S2_1"/>
    <property type="match status" value="1"/>
</dbReference>
<dbReference type="PROSITE" id="PS00963">
    <property type="entry name" value="RIBOSOMAL_S2_2"/>
    <property type="match status" value="1"/>
</dbReference>
<protein>
    <recommendedName>
        <fullName evidence="1">Small ribosomal subunit protein uS2c</fullName>
    </recommendedName>
    <alternativeName>
        <fullName>Plastid 30S ribosomal protein S2</fullName>
    </alternativeName>
</protein>
<sequence>MTKRYWNINLEEMMGAGVHFGHGTRKWNPQIAPFISAKRKGIHITNLTRTARFLSEACDLVFDAARRGKKFLIVGTNNKAAYSVARASRKARCHYVNKKWLAGMLTNWSTTETRLNKFRDLRMEQKKGGLNHLPKRDATMFKRQLARLQTYLGGIQYMTGLPDIVIIVDQHKEYTALRECITLGIPTICLIDTNCDPNLSDISIPANDDAISSIRFILNKLVFAICEGRFSYLRSP</sequence>
<reference key="1">
    <citation type="journal article" date="2007" name="BMC Plant Biol.">
        <title>Complete plastid genome sequences suggest strong selection for retention of photosynthetic genes in the parasitic plant genus Cuscuta.</title>
        <authorList>
            <person name="McNeal J.R."/>
            <person name="Kuehl J.V."/>
            <person name="Boore J.L."/>
            <person name="dePamphilis C.W."/>
        </authorList>
    </citation>
    <scope>NUCLEOTIDE SEQUENCE [LARGE SCALE GENOMIC DNA]</scope>
</reference>
<proteinExistence type="inferred from homology"/>
<evidence type="ECO:0000305" key="1"/>
<gene>
    <name type="primary">rps2</name>
</gene>
<accession>A8W3B3</accession>
<geneLocation type="plastid"/>